<protein>
    <recommendedName>
        <fullName>Liprin-alpha-2</fullName>
    </recommendedName>
    <alternativeName>
        <fullName>Protein tyrosine phosphatase receptor type f polypeptide-interacting protein alpha-2</fullName>
        <shortName>PTPRF-interacting protein alpha-2</shortName>
    </alternativeName>
</protein>
<feature type="chain" id="PRO_0000191028" description="Liprin-alpha-2">
    <location>
        <begin position="1"/>
        <end position="1257"/>
    </location>
</feature>
<feature type="domain" description="SAM 1" evidence="3">
    <location>
        <begin position="898"/>
        <end position="964"/>
    </location>
</feature>
<feature type="domain" description="SAM 2" evidence="3">
    <location>
        <begin position="1020"/>
        <end position="1084"/>
    </location>
</feature>
<feature type="domain" description="SAM 3" evidence="3">
    <location>
        <begin position="1108"/>
        <end position="1177"/>
    </location>
</feature>
<feature type="region of interest" description="Disordered" evidence="4">
    <location>
        <begin position="1"/>
        <end position="29"/>
    </location>
</feature>
<feature type="region of interest" description="Disordered" evidence="4">
    <location>
        <begin position="439"/>
        <end position="463"/>
    </location>
</feature>
<feature type="region of interest" description="Disordered" evidence="4">
    <location>
        <begin position="709"/>
        <end position="738"/>
    </location>
</feature>
<feature type="region of interest" description="Disordered" evidence="4">
    <location>
        <begin position="759"/>
        <end position="834"/>
    </location>
</feature>
<feature type="coiled-coil region" evidence="2">
    <location>
        <begin position="29"/>
        <end position="154"/>
    </location>
</feature>
<feature type="coiled-coil region" evidence="2">
    <location>
        <begin position="185"/>
        <end position="235"/>
    </location>
</feature>
<feature type="coiled-coil region" evidence="2">
    <location>
        <begin position="264"/>
        <end position="541"/>
    </location>
</feature>
<feature type="coiled-coil region" evidence="2">
    <location>
        <begin position="643"/>
        <end position="695"/>
    </location>
</feature>
<feature type="coiled-coil region" evidence="2">
    <location>
        <begin position="1081"/>
        <end position="1107"/>
    </location>
</feature>
<feature type="compositionally biased region" description="Low complexity" evidence="4">
    <location>
        <begin position="16"/>
        <end position="26"/>
    </location>
</feature>
<feature type="compositionally biased region" description="Low complexity" evidence="4">
    <location>
        <begin position="709"/>
        <end position="725"/>
    </location>
</feature>
<feature type="compositionally biased region" description="Polar residues" evidence="4">
    <location>
        <begin position="787"/>
        <end position="802"/>
    </location>
</feature>
<feature type="modified residue" description="Phosphoserine" evidence="6">
    <location>
        <position position="236"/>
    </location>
</feature>
<feature type="modified residue" description="Phosphothreonine" evidence="6">
    <location>
        <position position="237"/>
    </location>
</feature>
<feature type="modified residue" description="Phosphoserine" evidence="6">
    <location>
        <position position="239"/>
    </location>
</feature>
<feature type="modified residue" description="Phosphoserine" evidence="6">
    <location>
        <position position="687"/>
    </location>
</feature>
<feature type="modified residue" description="Phosphoserine" evidence="6">
    <location>
        <position position="689"/>
    </location>
</feature>
<feature type="modified residue" description="Phosphoserine" evidence="6">
    <location>
        <position position="817"/>
    </location>
</feature>
<feature type="modified residue" description="Phosphoserine" evidence="6">
    <location>
        <position position="820"/>
    </location>
</feature>
<feature type="sequence conflict" description="In Ref. 2; AAH65133." evidence="5" ref="2">
    <original>VS</original>
    <variation>ER</variation>
    <location>
        <begin position="516"/>
        <end position="517"/>
    </location>
</feature>
<feature type="sequence conflict" description="In Ref. 2; AAH65133." evidence="5" ref="2">
    <location>
        <position position="798"/>
    </location>
</feature>
<evidence type="ECO:0000250" key="1">
    <source>
        <dbReference type="UniProtKB" id="O75334"/>
    </source>
</evidence>
<evidence type="ECO:0000255" key="2"/>
<evidence type="ECO:0000255" key="3">
    <source>
        <dbReference type="PROSITE-ProRule" id="PRU00184"/>
    </source>
</evidence>
<evidence type="ECO:0000256" key="4">
    <source>
        <dbReference type="SAM" id="MobiDB-lite"/>
    </source>
</evidence>
<evidence type="ECO:0000305" key="5"/>
<evidence type="ECO:0007744" key="6">
    <source>
    </source>
</evidence>
<organism>
    <name type="scientific">Mus musculus</name>
    <name type="common">Mouse</name>
    <dbReference type="NCBI Taxonomy" id="10090"/>
    <lineage>
        <taxon>Eukaryota</taxon>
        <taxon>Metazoa</taxon>
        <taxon>Chordata</taxon>
        <taxon>Craniata</taxon>
        <taxon>Vertebrata</taxon>
        <taxon>Euteleostomi</taxon>
        <taxon>Mammalia</taxon>
        <taxon>Eutheria</taxon>
        <taxon>Euarchontoglires</taxon>
        <taxon>Glires</taxon>
        <taxon>Rodentia</taxon>
        <taxon>Myomorpha</taxon>
        <taxon>Muroidea</taxon>
        <taxon>Muridae</taxon>
        <taxon>Murinae</taxon>
        <taxon>Mus</taxon>
        <taxon>Mus</taxon>
    </lineage>
</organism>
<keyword id="KW-0966">Cell projection</keyword>
<keyword id="KW-0175">Coiled coil</keyword>
<keyword id="KW-0963">Cytoplasm</keyword>
<keyword id="KW-0597">Phosphoprotein</keyword>
<keyword id="KW-1185">Reference proteome</keyword>
<keyword id="KW-0677">Repeat</keyword>
<keyword id="KW-0770">Synapse</keyword>
<dbReference type="EMBL" id="AC111014">
    <property type="status" value="NOT_ANNOTATED_CDS"/>
    <property type="molecule type" value="Genomic_DNA"/>
</dbReference>
<dbReference type="EMBL" id="BC065133">
    <property type="protein sequence ID" value="AAH65133.1"/>
    <property type="molecule type" value="mRNA"/>
</dbReference>
<dbReference type="EMBL" id="AK030621">
    <property type="protein sequence ID" value="BAC27051.1"/>
    <property type="molecule type" value="mRNA"/>
</dbReference>
<dbReference type="EMBL" id="AK087448">
    <property type="protein sequence ID" value="BAC39878.1"/>
    <property type="molecule type" value="mRNA"/>
</dbReference>
<dbReference type="CCDS" id="CCDS56746.1"/>
<dbReference type="RefSeq" id="NP_796347.2">
    <property type="nucleotide sequence ID" value="NM_177373.4"/>
</dbReference>
<dbReference type="SMR" id="Q8BSS9"/>
<dbReference type="BioGRID" id="236493">
    <property type="interactions" value="14"/>
</dbReference>
<dbReference type="FunCoup" id="Q8BSS9">
    <property type="interactions" value="383"/>
</dbReference>
<dbReference type="IntAct" id="Q8BSS9">
    <property type="interactions" value="4"/>
</dbReference>
<dbReference type="MINT" id="Q8BSS9"/>
<dbReference type="STRING" id="10090.ENSMUSP00000151545"/>
<dbReference type="GlyGen" id="Q8BSS9">
    <property type="glycosylation" value="7 sites, 1 N-linked glycan (1 site), 1 O-linked glycan (5 sites)"/>
</dbReference>
<dbReference type="iPTMnet" id="Q8BSS9"/>
<dbReference type="PhosphoSitePlus" id="Q8BSS9"/>
<dbReference type="SwissPalm" id="Q8BSS9"/>
<dbReference type="jPOST" id="Q8BSS9"/>
<dbReference type="PaxDb" id="10090-ENSMUSP00000029404"/>
<dbReference type="PeptideAtlas" id="Q8BSS9"/>
<dbReference type="ProteomicsDB" id="291957"/>
<dbReference type="Pumba" id="Q8BSS9"/>
<dbReference type="DNASU" id="327814"/>
<dbReference type="GeneID" id="327814"/>
<dbReference type="KEGG" id="mmu:327814"/>
<dbReference type="AGR" id="MGI:2443834"/>
<dbReference type="CTD" id="8499"/>
<dbReference type="MGI" id="MGI:2443834">
    <property type="gene designation" value="Ppfia2"/>
</dbReference>
<dbReference type="eggNOG" id="KOG0249">
    <property type="taxonomic scope" value="Eukaryota"/>
</dbReference>
<dbReference type="InParanoid" id="Q8BSS9"/>
<dbReference type="OrthoDB" id="2132119at2759"/>
<dbReference type="PhylomeDB" id="Q8BSS9"/>
<dbReference type="Reactome" id="R-MMU-181429">
    <property type="pathway name" value="Serotonin Neurotransmitter Release Cycle"/>
</dbReference>
<dbReference type="Reactome" id="R-MMU-181430">
    <property type="pathway name" value="Norepinephrine Neurotransmitter Release Cycle"/>
</dbReference>
<dbReference type="Reactome" id="R-MMU-210500">
    <property type="pathway name" value="Glutamate Neurotransmitter Release Cycle"/>
</dbReference>
<dbReference type="Reactome" id="R-MMU-212676">
    <property type="pathway name" value="Dopamine Neurotransmitter Release Cycle"/>
</dbReference>
<dbReference type="Reactome" id="R-MMU-264642">
    <property type="pathway name" value="Acetylcholine Neurotransmitter Release Cycle"/>
</dbReference>
<dbReference type="Reactome" id="R-MMU-388844">
    <property type="pathway name" value="Receptor-type tyrosine-protein phosphatases"/>
</dbReference>
<dbReference type="BioGRID-ORCS" id="327814">
    <property type="hits" value="1 hit in 79 CRISPR screens"/>
</dbReference>
<dbReference type="CD-CODE" id="CE726F99">
    <property type="entry name" value="Postsynaptic density"/>
</dbReference>
<dbReference type="ChiTaRS" id="Ppfia2">
    <property type="organism name" value="mouse"/>
</dbReference>
<dbReference type="PRO" id="PR:Q8BSS9"/>
<dbReference type="Proteomes" id="UP000000589">
    <property type="component" value="Unplaced"/>
</dbReference>
<dbReference type="RNAct" id="Q8BSS9">
    <property type="molecule type" value="protein"/>
</dbReference>
<dbReference type="GO" id="GO:0030424">
    <property type="term" value="C:axon"/>
    <property type="evidence" value="ECO:0007669"/>
    <property type="project" value="GOC"/>
</dbReference>
<dbReference type="GO" id="GO:0009986">
    <property type="term" value="C:cell surface"/>
    <property type="evidence" value="ECO:0007669"/>
    <property type="project" value="UniProtKB-SubCell"/>
</dbReference>
<dbReference type="GO" id="GO:0043197">
    <property type="term" value="C:dendritic spine"/>
    <property type="evidence" value="ECO:0000250"/>
    <property type="project" value="UniProtKB"/>
</dbReference>
<dbReference type="GO" id="GO:0098978">
    <property type="term" value="C:glutamatergic synapse"/>
    <property type="evidence" value="ECO:0000314"/>
    <property type="project" value="SynGO"/>
</dbReference>
<dbReference type="GO" id="GO:0099523">
    <property type="term" value="C:presynaptic cytosol"/>
    <property type="evidence" value="ECO:0000314"/>
    <property type="project" value="SynGO"/>
</dbReference>
<dbReference type="GO" id="GO:0045202">
    <property type="term" value="C:synapse"/>
    <property type="evidence" value="ECO:0000314"/>
    <property type="project" value="MGI"/>
</dbReference>
<dbReference type="GO" id="GO:0044877">
    <property type="term" value="F:protein-containing complex binding"/>
    <property type="evidence" value="ECO:0000314"/>
    <property type="project" value="MGI"/>
</dbReference>
<dbReference type="GO" id="GO:0099519">
    <property type="term" value="P:dense core granule cytoskeletal transport"/>
    <property type="evidence" value="ECO:0000250"/>
    <property type="project" value="UniProtKB"/>
</dbReference>
<dbReference type="GO" id="GO:0060998">
    <property type="term" value="P:regulation of dendritic spine development"/>
    <property type="evidence" value="ECO:0000250"/>
    <property type="project" value="UniProtKB"/>
</dbReference>
<dbReference type="GO" id="GO:0061001">
    <property type="term" value="P:regulation of dendritic spine morphogenesis"/>
    <property type="evidence" value="ECO:0000250"/>
    <property type="project" value="UniProtKB"/>
</dbReference>
<dbReference type="CDD" id="cd09562">
    <property type="entry name" value="SAM_liprin-alpha1_2_3_4_repeat1"/>
    <property type="match status" value="1"/>
</dbReference>
<dbReference type="CDD" id="cd09565">
    <property type="entry name" value="SAM_liprin-alpha1_2_3_4_repeat2"/>
    <property type="match status" value="1"/>
</dbReference>
<dbReference type="CDD" id="cd09568">
    <property type="entry name" value="SAM_liprin-alpha1_2_3_4_repeat3"/>
    <property type="match status" value="1"/>
</dbReference>
<dbReference type="FunFam" id="1.10.150.50:FF:000003">
    <property type="entry name" value="liprin-alpha-2 isoform X1"/>
    <property type="match status" value="1"/>
</dbReference>
<dbReference type="FunFam" id="1.10.150.50:FF:000002">
    <property type="entry name" value="PTPRF interacting protein alpha 1"/>
    <property type="match status" value="1"/>
</dbReference>
<dbReference type="FunFam" id="1.10.150.50:FF:000004">
    <property type="entry name" value="PTPRF interacting protein alpha 1"/>
    <property type="match status" value="1"/>
</dbReference>
<dbReference type="Gene3D" id="1.10.150.50">
    <property type="entry name" value="Transcription Factor, Ets-1"/>
    <property type="match status" value="3"/>
</dbReference>
<dbReference type="InterPro" id="IPR029515">
    <property type="entry name" value="Liprin"/>
</dbReference>
<dbReference type="InterPro" id="IPR037620">
    <property type="entry name" value="Liprin-alpha_SAM_rpt_1"/>
</dbReference>
<dbReference type="InterPro" id="IPR037621">
    <property type="entry name" value="Liprin-alpha_SAM_rpt_2"/>
</dbReference>
<dbReference type="InterPro" id="IPR037622">
    <property type="entry name" value="Liprin-alpha_SAM_rpt_3"/>
</dbReference>
<dbReference type="InterPro" id="IPR001660">
    <property type="entry name" value="SAM"/>
</dbReference>
<dbReference type="InterPro" id="IPR013761">
    <property type="entry name" value="SAM/pointed_sf"/>
</dbReference>
<dbReference type="PANTHER" id="PTHR12587">
    <property type="entry name" value="LAR INTERACTING PROTEIN LIP -RELATED PROTEIN"/>
    <property type="match status" value="1"/>
</dbReference>
<dbReference type="PANTHER" id="PTHR12587:SF6">
    <property type="entry name" value="LIPRIN-ALPHA-2"/>
    <property type="match status" value="1"/>
</dbReference>
<dbReference type="Pfam" id="PF00536">
    <property type="entry name" value="SAM_1"/>
    <property type="match status" value="2"/>
</dbReference>
<dbReference type="Pfam" id="PF07647">
    <property type="entry name" value="SAM_2"/>
    <property type="match status" value="1"/>
</dbReference>
<dbReference type="SMART" id="SM00454">
    <property type="entry name" value="SAM"/>
    <property type="match status" value="3"/>
</dbReference>
<dbReference type="SUPFAM" id="SSF47769">
    <property type="entry name" value="SAM/Pointed domain"/>
    <property type="match status" value="3"/>
</dbReference>
<dbReference type="PROSITE" id="PS50105">
    <property type="entry name" value="SAM_DOMAIN"/>
    <property type="match status" value="3"/>
</dbReference>
<reference key="1">
    <citation type="journal article" date="2009" name="PLoS Biol.">
        <title>Lineage-specific biology revealed by a finished genome assembly of the mouse.</title>
        <authorList>
            <person name="Church D.M."/>
            <person name="Goodstadt L."/>
            <person name="Hillier L.W."/>
            <person name="Zody M.C."/>
            <person name="Goldstein S."/>
            <person name="She X."/>
            <person name="Bult C.J."/>
            <person name="Agarwala R."/>
            <person name="Cherry J.L."/>
            <person name="DiCuccio M."/>
            <person name="Hlavina W."/>
            <person name="Kapustin Y."/>
            <person name="Meric P."/>
            <person name="Maglott D."/>
            <person name="Birtle Z."/>
            <person name="Marques A.C."/>
            <person name="Graves T."/>
            <person name="Zhou S."/>
            <person name="Teague B."/>
            <person name="Potamousis K."/>
            <person name="Churas C."/>
            <person name="Place M."/>
            <person name="Herschleb J."/>
            <person name="Runnheim R."/>
            <person name="Forrest D."/>
            <person name="Amos-Landgraf J."/>
            <person name="Schwartz D.C."/>
            <person name="Cheng Z."/>
            <person name="Lindblad-Toh K."/>
            <person name="Eichler E.E."/>
            <person name="Ponting C.P."/>
        </authorList>
    </citation>
    <scope>NUCLEOTIDE SEQUENCE [LARGE SCALE GENOMIC DNA]</scope>
    <source>
        <strain>C57BL/6J</strain>
    </source>
</reference>
<reference key="2">
    <citation type="journal article" date="2004" name="Genome Res.">
        <title>The status, quality, and expansion of the NIH full-length cDNA project: the Mammalian Gene Collection (MGC).</title>
        <authorList>
            <consortium name="The MGC Project Team"/>
        </authorList>
    </citation>
    <scope>NUCLEOTIDE SEQUENCE [LARGE SCALE MRNA]</scope>
    <source>
        <strain>C57BL/6J</strain>
        <tissue>Brain</tissue>
    </source>
</reference>
<reference key="3">
    <citation type="journal article" date="2005" name="Science">
        <title>The transcriptional landscape of the mammalian genome.</title>
        <authorList>
            <person name="Carninci P."/>
            <person name="Kasukawa T."/>
            <person name="Katayama S."/>
            <person name="Gough J."/>
            <person name="Frith M.C."/>
            <person name="Maeda N."/>
            <person name="Oyama R."/>
            <person name="Ravasi T."/>
            <person name="Lenhard B."/>
            <person name="Wells C."/>
            <person name="Kodzius R."/>
            <person name="Shimokawa K."/>
            <person name="Bajic V.B."/>
            <person name="Brenner S.E."/>
            <person name="Batalov S."/>
            <person name="Forrest A.R."/>
            <person name="Zavolan M."/>
            <person name="Davis M.J."/>
            <person name="Wilming L.G."/>
            <person name="Aidinis V."/>
            <person name="Allen J.E."/>
            <person name="Ambesi-Impiombato A."/>
            <person name="Apweiler R."/>
            <person name="Aturaliya R.N."/>
            <person name="Bailey T.L."/>
            <person name="Bansal M."/>
            <person name="Baxter L."/>
            <person name="Beisel K.W."/>
            <person name="Bersano T."/>
            <person name="Bono H."/>
            <person name="Chalk A.M."/>
            <person name="Chiu K.P."/>
            <person name="Choudhary V."/>
            <person name="Christoffels A."/>
            <person name="Clutterbuck D.R."/>
            <person name="Crowe M.L."/>
            <person name="Dalla E."/>
            <person name="Dalrymple B.P."/>
            <person name="de Bono B."/>
            <person name="Della Gatta G."/>
            <person name="di Bernardo D."/>
            <person name="Down T."/>
            <person name="Engstrom P."/>
            <person name="Fagiolini M."/>
            <person name="Faulkner G."/>
            <person name="Fletcher C.F."/>
            <person name="Fukushima T."/>
            <person name="Furuno M."/>
            <person name="Futaki S."/>
            <person name="Gariboldi M."/>
            <person name="Georgii-Hemming P."/>
            <person name="Gingeras T.R."/>
            <person name="Gojobori T."/>
            <person name="Green R.E."/>
            <person name="Gustincich S."/>
            <person name="Harbers M."/>
            <person name="Hayashi Y."/>
            <person name="Hensch T.K."/>
            <person name="Hirokawa N."/>
            <person name="Hill D."/>
            <person name="Huminiecki L."/>
            <person name="Iacono M."/>
            <person name="Ikeo K."/>
            <person name="Iwama A."/>
            <person name="Ishikawa T."/>
            <person name="Jakt M."/>
            <person name="Kanapin A."/>
            <person name="Katoh M."/>
            <person name="Kawasawa Y."/>
            <person name="Kelso J."/>
            <person name="Kitamura H."/>
            <person name="Kitano H."/>
            <person name="Kollias G."/>
            <person name="Krishnan S.P."/>
            <person name="Kruger A."/>
            <person name="Kummerfeld S.K."/>
            <person name="Kurochkin I.V."/>
            <person name="Lareau L.F."/>
            <person name="Lazarevic D."/>
            <person name="Lipovich L."/>
            <person name="Liu J."/>
            <person name="Liuni S."/>
            <person name="McWilliam S."/>
            <person name="Madan Babu M."/>
            <person name="Madera M."/>
            <person name="Marchionni L."/>
            <person name="Matsuda H."/>
            <person name="Matsuzawa S."/>
            <person name="Miki H."/>
            <person name="Mignone F."/>
            <person name="Miyake S."/>
            <person name="Morris K."/>
            <person name="Mottagui-Tabar S."/>
            <person name="Mulder N."/>
            <person name="Nakano N."/>
            <person name="Nakauchi H."/>
            <person name="Ng P."/>
            <person name="Nilsson R."/>
            <person name="Nishiguchi S."/>
            <person name="Nishikawa S."/>
            <person name="Nori F."/>
            <person name="Ohara O."/>
            <person name="Okazaki Y."/>
            <person name="Orlando V."/>
            <person name="Pang K.C."/>
            <person name="Pavan W.J."/>
            <person name="Pavesi G."/>
            <person name="Pesole G."/>
            <person name="Petrovsky N."/>
            <person name="Piazza S."/>
            <person name="Reed J."/>
            <person name="Reid J.F."/>
            <person name="Ring B.Z."/>
            <person name="Ringwald M."/>
            <person name="Rost B."/>
            <person name="Ruan Y."/>
            <person name="Salzberg S.L."/>
            <person name="Sandelin A."/>
            <person name="Schneider C."/>
            <person name="Schoenbach C."/>
            <person name="Sekiguchi K."/>
            <person name="Semple C.A."/>
            <person name="Seno S."/>
            <person name="Sessa L."/>
            <person name="Sheng Y."/>
            <person name="Shibata Y."/>
            <person name="Shimada H."/>
            <person name="Shimada K."/>
            <person name="Silva D."/>
            <person name="Sinclair B."/>
            <person name="Sperling S."/>
            <person name="Stupka E."/>
            <person name="Sugiura K."/>
            <person name="Sultana R."/>
            <person name="Takenaka Y."/>
            <person name="Taki K."/>
            <person name="Tammoja K."/>
            <person name="Tan S.L."/>
            <person name="Tang S."/>
            <person name="Taylor M.S."/>
            <person name="Tegner J."/>
            <person name="Teichmann S.A."/>
            <person name="Ueda H.R."/>
            <person name="van Nimwegen E."/>
            <person name="Verardo R."/>
            <person name="Wei C.L."/>
            <person name="Yagi K."/>
            <person name="Yamanishi H."/>
            <person name="Zabarovsky E."/>
            <person name="Zhu S."/>
            <person name="Zimmer A."/>
            <person name="Hide W."/>
            <person name="Bult C."/>
            <person name="Grimmond S.M."/>
            <person name="Teasdale R.D."/>
            <person name="Liu E.T."/>
            <person name="Brusic V."/>
            <person name="Quackenbush J."/>
            <person name="Wahlestedt C."/>
            <person name="Mattick J.S."/>
            <person name="Hume D.A."/>
            <person name="Kai C."/>
            <person name="Sasaki D."/>
            <person name="Tomaru Y."/>
            <person name="Fukuda S."/>
            <person name="Kanamori-Katayama M."/>
            <person name="Suzuki M."/>
            <person name="Aoki J."/>
            <person name="Arakawa T."/>
            <person name="Iida J."/>
            <person name="Imamura K."/>
            <person name="Itoh M."/>
            <person name="Kato T."/>
            <person name="Kawaji H."/>
            <person name="Kawagashira N."/>
            <person name="Kawashima T."/>
            <person name="Kojima M."/>
            <person name="Kondo S."/>
            <person name="Konno H."/>
            <person name="Nakano K."/>
            <person name="Ninomiya N."/>
            <person name="Nishio T."/>
            <person name="Okada M."/>
            <person name="Plessy C."/>
            <person name="Shibata K."/>
            <person name="Shiraki T."/>
            <person name="Suzuki S."/>
            <person name="Tagami M."/>
            <person name="Waki K."/>
            <person name="Watahiki A."/>
            <person name="Okamura-Oho Y."/>
            <person name="Suzuki H."/>
            <person name="Kawai J."/>
            <person name="Hayashizaki Y."/>
        </authorList>
    </citation>
    <scope>NUCLEOTIDE SEQUENCE [LARGE SCALE MRNA] OF 1-215 AND 1019-1257</scope>
    <source>
        <strain>C57BL/6J</strain>
        <tissue>Eye</tissue>
        <tissue>Pituitary</tissue>
    </source>
</reference>
<reference key="4">
    <citation type="journal article" date="2006" name="Mol. Cell. Proteomics">
        <title>Comprehensive identification of phosphorylation sites in postsynaptic density preparations.</title>
        <authorList>
            <person name="Trinidad J.C."/>
            <person name="Specht C.G."/>
            <person name="Thalhammer A."/>
            <person name="Schoepfer R."/>
            <person name="Burlingame A.L."/>
        </authorList>
    </citation>
    <scope>IDENTIFICATION BY MASS SPECTROMETRY [LARGE SCALE ANALYSIS]</scope>
    <source>
        <tissue>Brain</tissue>
    </source>
</reference>
<reference key="5">
    <citation type="journal article" date="2010" name="Cell">
        <title>A tissue-specific atlas of mouse protein phosphorylation and expression.</title>
        <authorList>
            <person name="Huttlin E.L."/>
            <person name="Jedrychowski M.P."/>
            <person name="Elias J.E."/>
            <person name="Goswami T."/>
            <person name="Rad R."/>
            <person name="Beausoleil S.A."/>
            <person name="Villen J."/>
            <person name="Haas W."/>
            <person name="Sowa M.E."/>
            <person name="Gygi S.P."/>
        </authorList>
    </citation>
    <scope>PHOSPHORYLATION [LARGE SCALE ANALYSIS] AT SER-236; THR-237; SER-239; SER-687; SER-689; SER-817 AND SER-820</scope>
    <scope>IDENTIFICATION BY MASS SPECTROMETRY [LARGE SCALE ANALYSIS]</scope>
    <source>
        <tissue>Brain</tissue>
    </source>
</reference>
<comment type="function">
    <text evidence="1">Alters PTPRF cellular localization and induces PTPRF clustering. May regulate the disassembly of focal adhesions. May localize receptor-like tyrosine phosphatases type 2A at specific sites on the plasma membrane, possibly regulating their interaction with the extracellular environment and their association with substrates. In neuronal cells, is a scaffolding protein in the dendritic spines which acts as immobile postsynaptic post able to recruit KIF1A-driven dense core vesicles to dendritic spines.</text>
</comment>
<comment type="subunit">
    <text evidence="1">Forms homodimers and heterodimers with liprins-alpha and liprins-beta. Interacts with the second PTPase domain of PTPRD, PTPRF and PTPRS. Interacts with KIF1A; the interaction decreases in presence of calcium.</text>
</comment>
<comment type="subcellular location">
    <subcellularLocation>
        <location evidence="1">Cytoplasm</location>
    </subcellularLocation>
    <subcellularLocation>
        <location evidence="1">Cell surface</location>
    </subcellularLocation>
    <subcellularLocation>
        <location evidence="1">Cell projection</location>
        <location evidence="1">Dendritic spine</location>
    </subcellularLocation>
    <text evidence="1">Colocalizes with PTPRF at the cell surface.</text>
</comment>
<comment type="domain">
    <text evidence="1">The N-terminal coiled coil regions mediate homodimerization preferentially and heterodimerization type alpha/alpha. The C-terminal, non-coiled coil regions mediate heterodimerization type alpha/beta and interaction with PTPRD, PTPRF and PTPRS (By similarity).</text>
</comment>
<comment type="similarity">
    <text evidence="5">Belongs to the liprin family. Liprin-alpha subfamily.</text>
</comment>
<gene>
    <name type="primary">Ppfia2</name>
</gene>
<proteinExistence type="evidence at protein level"/>
<accession>Q8BSS9</accession>
<accession>Q6P1D2</accession>
<accession>Q8BN73</accession>
<name>LIPA2_MOUSE</name>
<sequence length="1257" mass="143234">MMCEVMPTINEDTPMSQRGSQSSGSDSDSHFEQLMVNMLDERDRLLDTLRETQESLSLAQQRLQDVIYDRDSLQRQLNSALPQDIESLTGGLTGSKGADPPEFAALTKELNACREQLLEKEEEISELKAERNNTRLLLEHLECLVSRHERSLRMTVVKRQAQSPSGVSSEVEVLKALKSLFEHHKALDEKVRERLRVSLERVSALEEELAAANQEIVALREQNVHIQRKMVSSEGSTESEHLEGMEAGQKVHEKRLSNGSIDSTDDTSQIVELQELLEKQNYEMAQMKERLTALSSRVGEVEQEAETARKDLIKTEEMNTKYQRDIREAMAQKEDMEERITTLEKRYLSAQRESTSIHDMNDKLENELANKEAILRQMEEKNRQLQERLELAEQKLQQTMRKAETLPEVEAELAQRIAALTKAEERHGNIEERMRHLEGQLEEKNQELQRARQREKMNEEHNKRLSDTVDRLLTESNERLQLHLKERMAALEEKNVLIQESENFRKNLEESLHDKVSLAEEIEKLRSELDQMKMRTGSLIEPTISRTHIDTSTELRYSVGSLVDSQSDYRTTKVIRRPRRGRMGVRRDEPKVKSLGDHEWNRTQQIGVLGSHPFESDTEMSDIDDDDRETIFSSMDLLSPSGHSDAQTLAMMLQEQLDAINKEIRLIQEEKESTELRAEEIENRVASVSLEGLNLARVHPGTSITASVTASSLASSSPPSGHSTPKLTPRSPAREMDRMGVMTLPSDLRKHRRKIAVVEEDGREDKATIKCETSPPPTPRAVRMTHTLPSSYHNDARSSLSASLEPDSLGLGSANSSQDSLHKAPKKKGIKSSIGRLFGKKEKARLGQLRGFMETEAAAQESLGLGKLGTQAEKDRRLKKKHELLEEARRKGLPFAQWDGPTVVAWLELWLGMPAWYVAACRANVKSGAIMSALSDTEIQREIGISNPLHRLKLRLAIQEMVSLTSPSAPPTSRTPSGNVWVTHEEMENLTAPAKTKESEEGSWAQCPVFLQTLAYGDMNHEWIGNEWLPSLGLPQYRSYFMECLVDARMLDHLTKKDLRVHLKMVDSFHRTSLQYGIMCLKRLNYDRKELERRREASQHEIKDVLVWSNDRVIRWIQAIGLREYANNILESGVHGSLIALDENFDYSSLALLLQIPTQNTQARQILEREYNNLLALGTERRLDESDDKNFRRGSTWRRQFPPREVHGISMMPGSSETLPAGFRLTTTSGQSRKMTTDVASSRLQRLDNSTVRTYSC</sequence>